<organism>
    <name type="scientific">Desulfatibacillum aliphaticivorans</name>
    <dbReference type="NCBI Taxonomy" id="218208"/>
    <lineage>
        <taxon>Bacteria</taxon>
        <taxon>Pseudomonadati</taxon>
        <taxon>Thermodesulfobacteriota</taxon>
        <taxon>Desulfobacteria</taxon>
        <taxon>Desulfobacterales</taxon>
        <taxon>Desulfatibacillaceae</taxon>
        <taxon>Desulfatibacillum</taxon>
    </lineage>
</organism>
<accession>B8F9K1</accession>
<reference key="1">
    <citation type="journal article" date="2012" name="Environ. Microbiol.">
        <title>The genome sequence of Desulfatibacillum alkenivorans AK-01: a blueprint for anaerobic alkane oxidation.</title>
        <authorList>
            <person name="Callaghan A.V."/>
            <person name="Morris B.E."/>
            <person name="Pereira I.A."/>
            <person name="McInerney M.J."/>
            <person name="Austin R.N."/>
            <person name="Groves J.T."/>
            <person name="Kukor J.J."/>
            <person name="Suflita J.M."/>
            <person name="Young L.Y."/>
            <person name="Zylstra G.J."/>
            <person name="Wawrik B."/>
        </authorList>
    </citation>
    <scope>NUCLEOTIDE SEQUENCE [LARGE SCALE GENOMIC DNA]</scope>
    <source>
        <strain>AK-01</strain>
    </source>
</reference>
<dbReference type="EC" id="3.4.21.53" evidence="1"/>
<dbReference type="EMBL" id="CP001322">
    <property type="protein sequence ID" value="ACL02947.1"/>
    <property type="molecule type" value="Genomic_DNA"/>
</dbReference>
<dbReference type="RefSeq" id="WP_012610383.1">
    <property type="nucleotide sequence ID" value="NC_011768.1"/>
</dbReference>
<dbReference type="SMR" id="B8F9K1"/>
<dbReference type="MEROPS" id="S16.001"/>
<dbReference type="KEGG" id="dal:Dalk_1244"/>
<dbReference type="eggNOG" id="COG0466">
    <property type="taxonomic scope" value="Bacteria"/>
</dbReference>
<dbReference type="HOGENOM" id="CLU_004109_4_3_7"/>
<dbReference type="Proteomes" id="UP000000739">
    <property type="component" value="Chromosome"/>
</dbReference>
<dbReference type="GO" id="GO:0005737">
    <property type="term" value="C:cytoplasm"/>
    <property type="evidence" value="ECO:0007669"/>
    <property type="project" value="UniProtKB-SubCell"/>
</dbReference>
<dbReference type="GO" id="GO:0005524">
    <property type="term" value="F:ATP binding"/>
    <property type="evidence" value="ECO:0007669"/>
    <property type="project" value="UniProtKB-UniRule"/>
</dbReference>
<dbReference type="GO" id="GO:0016887">
    <property type="term" value="F:ATP hydrolysis activity"/>
    <property type="evidence" value="ECO:0007669"/>
    <property type="project" value="UniProtKB-UniRule"/>
</dbReference>
<dbReference type="GO" id="GO:0004176">
    <property type="term" value="F:ATP-dependent peptidase activity"/>
    <property type="evidence" value="ECO:0007669"/>
    <property type="project" value="UniProtKB-UniRule"/>
</dbReference>
<dbReference type="GO" id="GO:0043565">
    <property type="term" value="F:sequence-specific DNA binding"/>
    <property type="evidence" value="ECO:0007669"/>
    <property type="project" value="UniProtKB-UniRule"/>
</dbReference>
<dbReference type="GO" id="GO:0004252">
    <property type="term" value="F:serine-type endopeptidase activity"/>
    <property type="evidence" value="ECO:0007669"/>
    <property type="project" value="UniProtKB-UniRule"/>
</dbReference>
<dbReference type="GO" id="GO:0034605">
    <property type="term" value="P:cellular response to heat"/>
    <property type="evidence" value="ECO:0007669"/>
    <property type="project" value="UniProtKB-UniRule"/>
</dbReference>
<dbReference type="GO" id="GO:0006515">
    <property type="term" value="P:protein quality control for misfolded or incompletely synthesized proteins"/>
    <property type="evidence" value="ECO:0007669"/>
    <property type="project" value="UniProtKB-UniRule"/>
</dbReference>
<dbReference type="CDD" id="cd19500">
    <property type="entry name" value="RecA-like_Lon"/>
    <property type="match status" value="1"/>
</dbReference>
<dbReference type="FunFam" id="1.20.5.5270:FF:000002">
    <property type="entry name" value="Lon protease homolog"/>
    <property type="match status" value="1"/>
</dbReference>
<dbReference type="FunFam" id="3.40.50.300:FF:000382">
    <property type="entry name" value="Lon protease homolog 2, peroxisomal"/>
    <property type="match status" value="1"/>
</dbReference>
<dbReference type="Gene3D" id="1.10.8.60">
    <property type="match status" value="1"/>
</dbReference>
<dbReference type="Gene3D" id="1.20.5.5270">
    <property type="match status" value="1"/>
</dbReference>
<dbReference type="Gene3D" id="1.20.58.1480">
    <property type="match status" value="1"/>
</dbReference>
<dbReference type="Gene3D" id="3.30.230.10">
    <property type="match status" value="1"/>
</dbReference>
<dbReference type="Gene3D" id="2.30.130.40">
    <property type="entry name" value="LON domain-like"/>
    <property type="match status" value="1"/>
</dbReference>
<dbReference type="Gene3D" id="3.40.50.300">
    <property type="entry name" value="P-loop containing nucleotide triphosphate hydrolases"/>
    <property type="match status" value="1"/>
</dbReference>
<dbReference type="HAMAP" id="MF_01973">
    <property type="entry name" value="lon_bact"/>
    <property type="match status" value="1"/>
</dbReference>
<dbReference type="InterPro" id="IPR003593">
    <property type="entry name" value="AAA+_ATPase"/>
</dbReference>
<dbReference type="InterPro" id="IPR003959">
    <property type="entry name" value="ATPase_AAA_core"/>
</dbReference>
<dbReference type="InterPro" id="IPR027543">
    <property type="entry name" value="Lon_bac"/>
</dbReference>
<dbReference type="InterPro" id="IPR004815">
    <property type="entry name" value="Lon_bac/euk-typ"/>
</dbReference>
<dbReference type="InterPro" id="IPR054594">
    <property type="entry name" value="Lon_lid"/>
</dbReference>
<dbReference type="InterPro" id="IPR008269">
    <property type="entry name" value="Lon_proteolytic"/>
</dbReference>
<dbReference type="InterPro" id="IPR027065">
    <property type="entry name" value="Lon_Prtase"/>
</dbReference>
<dbReference type="InterPro" id="IPR003111">
    <property type="entry name" value="Lon_prtase_N"/>
</dbReference>
<dbReference type="InterPro" id="IPR046336">
    <property type="entry name" value="Lon_prtase_N_sf"/>
</dbReference>
<dbReference type="InterPro" id="IPR027417">
    <property type="entry name" value="P-loop_NTPase"/>
</dbReference>
<dbReference type="InterPro" id="IPR008268">
    <property type="entry name" value="Peptidase_S16_AS"/>
</dbReference>
<dbReference type="InterPro" id="IPR015947">
    <property type="entry name" value="PUA-like_sf"/>
</dbReference>
<dbReference type="InterPro" id="IPR020568">
    <property type="entry name" value="Ribosomal_Su5_D2-typ_SF"/>
</dbReference>
<dbReference type="InterPro" id="IPR014721">
    <property type="entry name" value="Ribsml_uS5_D2-typ_fold_subgr"/>
</dbReference>
<dbReference type="NCBIfam" id="TIGR00763">
    <property type="entry name" value="lon"/>
    <property type="match status" value="1"/>
</dbReference>
<dbReference type="NCBIfam" id="NF008053">
    <property type="entry name" value="PRK10787.1"/>
    <property type="match status" value="1"/>
</dbReference>
<dbReference type="PANTHER" id="PTHR10046">
    <property type="entry name" value="ATP DEPENDENT LON PROTEASE FAMILY MEMBER"/>
    <property type="match status" value="1"/>
</dbReference>
<dbReference type="Pfam" id="PF00004">
    <property type="entry name" value="AAA"/>
    <property type="match status" value="1"/>
</dbReference>
<dbReference type="Pfam" id="PF05362">
    <property type="entry name" value="Lon_C"/>
    <property type="match status" value="1"/>
</dbReference>
<dbReference type="Pfam" id="PF22667">
    <property type="entry name" value="Lon_lid"/>
    <property type="match status" value="1"/>
</dbReference>
<dbReference type="Pfam" id="PF02190">
    <property type="entry name" value="LON_substr_bdg"/>
    <property type="match status" value="1"/>
</dbReference>
<dbReference type="PIRSF" id="PIRSF001174">
    <property type="entry name" value="Lon_proteas"/>
    <property type="match status" value="1"/>
</dbReference>
<dbReference type="PRINTS" id="PR00830">
    <property type="entry name" value="ENDOLAPTASE"/>
</dbReference>
<dbReference type="SMART" id="SM00382">
    <property type="entry name" value="AAA"/>
    <property type="match status" value="1"/>
</dbReference>
<dbReference type="SMART" id="SM00464">
    <property type="entry name" value="LON"/>
    <property type="match status" value="1"/>
</dbReference>
<dbReference type="SUPFAM" id="SSF52540">
    <property type="entry name" value="P-loop containing nucleoside triphosphate hydrolases"/>
    <property type="match status" value="1"/>
</dbReference>
<dbReference type="SUPFAM" id="SSF88697">
    <property type="entry name" value="PUA domain-like"/>
    <property type="match status" value="1"/>
</dbReference>
<dbReference type="SUPFAM" id="SSF54211">
    <property type="entry name" value="Ribosomal protein S5 domain 2-like"/>
    <property type="match status" value="1"/>
</dbReference>
<dbReference type="PROSITE" id="PS51787">
    <property type="entry name" value="LON_N"/>
    <property type="match status" value="1"/>
</dbReference>
<dbReference type="PROSITE" id="PS51786">
    <property type="entry name" value="LON_PROTEOLYTIC"/>
    <property type="match status" value="1"/>
</dbReference>
<dbReference type="PROSITE" id="PS01046">
    <property type="entry name" value="LON_SER"/>
    <property type="match status" value="1"/>
</dbReference>
<feature type="chain" id="PRO_0000396553" description="Lon protease">
    <location>
        <begin position="1"/>
        <end position="826"/>
    </location>
</feature>
<feature type="domain" description="Lon N-terminal" evidence="3">
    <location>
        <begin position="26"/>
        <end position="221"/>
    </location>
</feature>
<feature type="domain" description="Lon proteolytic" evidence="2">
    <location>
        <begin position="609"/>
        <end position="790"/>
    </location>
</feature>
<feature type="region of interest" description="Disordered" evidence="4">
    <location>
        <begin position="788"/>
        <end position="826"/>
    </location>
</feature>
<feature type="compositionally biased region" description="Basic residues" evidence="4">
    <location>
        <begin position="796"/>
        <end position="816"/>
    </location>
</feature>
<feature type="active site" evidence="1">
    <location>
        <position position="696"/>
    </location>
</feature>
<feature type="active site" evidence="1">
    <location>
        <position position="739"/>
    </location>
</feature>
<feature type="binding site" evidence="1">
    <location>
        <begin position="373"/>
        <end position="380"/>
    </location>
    <ligand>
        <name>ATP</name>
        <dbReference type="ChEBI" id="CHEBI:30616"/>
    </ligand>
</feature>
<gene>
    <name evidence="1" type="primary">lon</name>
    <name type="ordered locus">Dalk_1244</name>
</gene>
<keyword id="KW-0067">ATP-binding</keyword>
<keyword id="KW-0963">Cytoplasm</keyword>
<keyword id="KW-0378">Hydrolase</keyword>
<keyword id="KW-0547">Nucleotide-binding</keyword>
<keyword id="KW-0645">Protease</keyword>
<keyword id="KW-1185">Reference proteome</keyword>
<keyword id="KW-0720">Serine protease</keyword>
<keyword id="KW-0346">Stress response</keyword>
<evidence type="ECO:0000255" key="1">
    <source>
        <dbReference type="HAMAP-Rule" id="MF_01973"/>
    </source>
</evidence>
<evidence type="ECO:0000255" key="2">
    <source>
        <dbReference type="PROSITE-ProRule" id="PRU01122"/>
    </source>
</evidence>
<evidence type="ECO:0000255" key="3">
    <source>
        <dbReference type="PROSITE-ProRule" id="PRU01123"/>
    </source>
</evidence>
<evidence type="ECO:0000256" key="4">
    <source>
        <dbReference type="SAM" id="MobiDB-lite"/>
    </source>
</evidence>
<proteinExistence type="inferred from homology"/>
<comment type="function">
    <text evidence="1">ATP-dependent serine protease that mediates the selective degradation of mutant and abnormal proteins as well as certain short-lived regulatory proteins. Required for cellular homeostasis and for survival from DNA damage and developmental changes induced by stress. Degrades polypeptides processively to yield small peptide fragments that are 5 to 10 amino acids long. Binds to DNA in a double-stranded, site-specific manner.</text>
</comment>
<comment type="catalytic activity">
    <reaction evidence="1">
        <text>Hydrolysis of proteins in presence of ATP.</text>
        <dbReference type="EC" id="3.4.21.53"/>
    </reaction>
</comment>
<comment type="subunit">
    <text evidence="1">Homohexamer. Organized in a ring with a central cavity.</text>
</comment>
<comment type="subcellular location">
    <subcellularLocation>
        <location evidence="1">Cytoplasm</location>
    </subcellularLocation>
</comment>
<comment type="induction">
    <text evidence="1">By heat shock.</text>
</comment>
<comment type="similarity">
    <text evidence="1">Belongs to the peptidase S16 family.</text>
</comment>
<name>LON_DESAL</name>
<sequence>MAHTDTDDLVGLLDADDQNLDIPATLPMLPVRDVVVFTHMIIPLFVGRDKSVRAVDAAMAKDRFLFLATQMDGAVENPESDQIFKHGTAARILRVLKLPDGRVKVLVQGLAKAKIVRYTKKSDMFRVRIELLHEEDLGDLDMETEALMRNVKESCEKILGLRGELTPDVTMVLDGIDHPGRLADLVASNLNLKIEEAQSIFETIDPVQRLLAVNGFVSREVELSAMQARIQSSVRDEISKSQKDYFLREQMRAINRELGEMDEKTQEIKEYQDKIRKAKMPKEAKEEAERQLKRLEQMHPEAGEAPTVRTYLDWLVEVPWKKATKDTLDIKKAKEILEEDHYGLEKVKDRILEYLAVRKLNPKMKGPILCFVGPPGVGKTSLGKSIARAMGRKFYRLSLGGIRDEAEIRGHRRTYIGALPGRIIQGLKHCKSNNPVFMMDEIDKIGADFRGDPSSALLEALDPEQNFAFSDHYLNVPFDLSSVMFITTANMTDTIPSALLDRMEVINLAGYTENEKVLIAQQYLVPRQVKENGLKPEDITISGNALLKMATEYTSESGLRNLEREIGTLCRKVSRKIAEGKKGPYQITASSLVKYLGLEKFLPEMDQEEPQIGLATGLAWTHWGGEALYIETTLMRGKGELVLTGQLGEVMQESARAALSYARTNEDELEIDPDLFDNFDIHIHVPAGAIPKDGPSAGIAMTTALVSALTERPVANDIAMTGEVTIRGRVLPIGGLREKSLGALRAGIKTIIIPEKNKKELSEVPQQVRRKLKYITVSHVNEVLEKALLPAEKKKAPPKKKPPKKAAKPKAKKTQPKAKTTEAADK</sequence>
<protein>
    <recommendedName>
        <fullName evidence="1">Lon protease</fullName>
        <ecNumber evidence="1">3.4.21.53</ecNumber>
    </recommendedName>
    <alternativeName>
        <fullName evidence="1">ATP-dependent protease La</fullName>
    </alternativeName>
</protein>